<organism>
    <name type="scientific">Kluyveromyces lactis (strain ATCC 8585 / CBS 2359 / DSM 70799 / NBRC 1267 / NRRL Y-1140 / WM37)</name>
    <name type="common">Yeast</name>
    <name type="synonym">Candida sphaerica</name>
    <dbReference type="NCBI Taxonomy" id="284590"/>
    <lineage>
        <taxon>Eukaryota</taxon>
        <taxon>Fungi</taxon>
        <taxon>Dikarya</taxon>
        <taxon>Ascomycota</taxon>
        <taxon>Saccharomycotina</taxon>
        <taxon>Saccharomycetes</taxon>
        <taxon>Saccharomycetales</taxon>
        <taxon>Saccharomycetaceae</taxon>
        <taxon>Kluyveromyces</taxon>
    </lineage>
</organism>
<name>ALG10_KLULA</name>
<evidence type="ECO:0000250" key="1">
    <source>
        <dbReference type="UniProtKB" id="P50076"/>
    </source>
</evidence>
<evidence type="ECO:0000255" key="2"/>
<evidence type="ECO:0000305" key="3"/>
<comment type="function">
    <text evidence="1">Dol-P-Glc:Glc(2)Man(9)GlcNAc(2)-PP-Dol alpha-1,2-glucosyltransferase that operates in the biosynthetic pathway of dolichol-linked oligosaccharides, the glycan precursors employed in protein asparagine (N)-glycosylation. The assembly of dolichol-linked oligosaccharides begins on the cytosolic side of the endoplasmic reticulum membrane and finishes in its lumen. The sequential addition of sugars to dolichol pyrophosphate produces dolichol-linked oligosaccharides containing fourteen sugars, including two GlcNAcs, nine mannoses and three glucoses. Once assembled, the oligosaccharide is transferred from the lipid to nascent proteins by oligosaccharyltransferases. In the lumen of the endoplasmic reticulum, adds the third and last glucose residue from dolichyl phosphate glucose (Dol-P-Glc) onto the lipid-linked oligosaccharide intermediate Glc(2)Man(9)GlcNAc(2)-PP-Dol to produce Glc(3)Man(9)GlcNAc(2)-PP-Dol.</text>
</comment>
<comment type="catalytic activity">
    <reaction evidence="1">
        <text>an alpha-D-Glc-(1-&gt;3)-alpha-D-Glc-(1-&gt;3)-alpha-D-Man-(1-&gt;2)-alpha-D-Man-(1-&gt;2)-alpha-D-Man-(1-&gt;3)-[alpha-D-Man-(1-&gt;2)-alpha-D-Man-(1-&gt;3)-[alpha-D-Man-(1-&gt;2)-alpha-D-Man-(1-&gt;6)]-alpha-D-Man-(1-&gt;6)]-beta-D-Man-(1-&gt;4)-beta-D-GlcNAc-(1-&gt;4)-alpha-D-GlcNAc-diphospho-di-trans,poly-cis-dolichol + a di-trans,poly-cis-dolichyl beta-D-glucosyl phosphate = a alpha-D-Glc-(1-&gt;2)-alpha-D-Glc-(1-&gt;3)-alpha-D-Glc-(1-&gt;3)-alpha-D-Man-(1-&gt;2)-alpha-D-Man-(1-&gt;2)-alpha-D-Man-(1-&gt;3)-[alpha-D-Man-(1-&gt;2)-alpha-D-Man-(1-&gt;3)-[alpha-D-Man-(1-&gt;2)-alpha-D-Man-(1-&gt;6)]-alpha-D-Man-(1-&gt;6)]-beta-D-Man-(1-&gt;4)-beta-D-GlcNAc-(1-&gt;4)-alpha-D-GlcNAc-diphospho-di-trans,poly-cis-dolichol + a di-trans,poly-cis-dolichyl phosphate + H(+)</text>
        <dbReference type="Rhea" id="RHEA:29543"/>
        <dbReference type="Rhea" id="RHEA-COMP:19498"/>
        <dbReference type="Rhea" id="RHEA-COMP:19502"/>
        <dbReference type="Rhea" id="RHEA-COMP:19512"/>
        <dbReference type="Rhea" id="RHEA-COMP:19522"/>
        <dbReference type="ChEBI" id="CHEBI:15378"/>
        <dbReference type="ChEBI" id="CHEBI:57525"/>
        <dbReference type="ChEBI" id="CHEBI:57683"/>
        <dbReference type="ChEBI" id="CHEBI:132522"/>
        <dbReference type="ChEBI" id="CHEBI:132523"/>
        <dbReference type="EC" id="2.4.1.256"/>
    </reaction>
    <physiologicalReaction direction="left-to-right" evidence="1">
        <dbReference type="Rhea" id="RHEA:29544"/>
    </physiologicalReaction>
</comment>
<comment type="pathway">
    <text evidence="1">Protein modification; protein glycosylation.</text>
</comment>
<comment type="subcellular location">
    <subcellularLocation>
        <location evidence="1">Endoplasmic reticulum membrane</location>
        <topology evidence="2">Multi-pass membrane protein</topology>
    </subcellularLocation>
</comment>
<comment type="similarity">
    <text evidence="3">Belongs to the ALG10 glucosyltransferase family.</text>
</comment>
<dbReference type="EC" id="2.4.1.256" evidence="1"/>
<dbReference type="EMBL" id="CR382125">
    <property type="protein sequence ID" value="CAG99749.1"/>
    <property type="molecule type" value="Genomic_DNA"/>
</dbReference>
<dbReference type="RefSeq" id="XP_454662.1">
    <property type="nucleotide sequence ID" value="XM_454662.1"/>
</dbReference>
<dbReference type="FunCoup" id="Q6CN27">
    <property type="interactions" value="711"/>
</dbReference>
<dbReference type="STRING" id="284590.Q6CN27"/>
<dbReference type="CAZy" id="GT59">
    <property type="family name" value="Glycosyltransferase Family 59"/>
</dbReference>
<dbReference type="GlyCosmos" id="Q6CN27">
    <property type="glycosylation" value="3 sites, No reported glycans"/>
</dbReference>
<dbReference type="PaxDb" id="284590-Q6CN27"/>
<dbReference type="KEGG" id="kla:KLLA0_E15797g"/>
<dbReference type="eggNOG" id="KOG2642">
    <property type="taxonomic scope" value="Eukaryota"/>
</dbReference>
<dbReference type="HOGENOM" id="CLU_017053_1_0_1"/>
<dbReference type="InParanoid" id="Q6CN27"/>
<dbReference type="OMA" id="VWDSKIT"/>
<dbReference type="UniPathway" id="UPA00378"/>
<dbReference type="Proteomes" id="UP000000598">
    <property type="component" value="Chromosome E"/>
</dbReference>
<dbReference type="GO" id="GO:0005789">
    <property type="term" value="C:endoplasmic reticulum membrane"/>
    <property type="evidence" value="ECO:0007669"/>
    <property type="project" value="UniProtKB-SubCell"/>
</dbReference>
<dbReference type="GO" id="GO:0106073">
    <property type="term" value="F:dolichyl pyrophosphate Glc2Man9GlcNAc2 alpha-1,2-glucosyltransferase activity"/>
    <property type="evidence" value="ECO:0007669"/>
    <property type="project" value="UniProtKB-EC"/>
</dbReference>
<dbReference type="GO" id="GO:0006488">
    <property type="term" value="P:dolichol-linked oligosaccharide biosynthetic process"/>
    <property type="evidence" value="ECO:0007669"/>
    <property type="project" value="InterPro"/>
</dbReference>
<dbReference type="InterPro" id="IPR016900">
    <property type="entry name" value="Alg10"/>
</dbReference>
<dbReference type="PANTHER" id="PTHR12989">
    <property type="entry name" value="ALPHA-1,2-GLUCOSYLTRANSFERASE ALG10"/>
    <property type="match status" value="1"/>
</dbReference>
<dbReference type="PANTHER" id="PTHR12989:SF10">
    <property type="entry name" value="DOL-P-GLC:GLC(2)MAN(9)GLCNAC(2)-PP-DOL ALPHA-1,2-GLUCOSYLTRANSFERASE-RELATED"/>
    <property type="match status" value="1"/>
</dbReference>
<dbReference type="Pfam" id="PF04922">
    <property type="entry name" value="DIE2_ALG10"/>
    <property type="match status" value="1"/>
</dbReference>
<dbReference type="PIRSF" id="PIRSF028810">
    <property type="entry name" value="Alpha1_2_glucosyltferase_Alg10"/>
    <property type="match status" value="1"/>
</dbReference>
<reference key="1">
    <citation type="journal article" date="2004" name="Nature">
        <title>Genome evolution in yeasts.</title>
        <authorList>
            <person name="Dujon B."/>
            <person name="Sherman D."/>
            <person name="Fischer G."/>
            <person name="Durrens P."/>
            <person name="Casaregola S."/>
            <person name="Lafontaine I."/>
            <person name="de Montigny J."/>
            <person name="Marck C."/>
            <person name="Neuveglise C."/>
            <person name="Talla E."/>
            <person name="Goffard N."/>
            <person name="Frangeul L."/>
            <person name="Aigle M."/>
            <person name="Anthouard V."/>
            <person name="Babour A."/>
            <person name="Barbe V."/>
            <person name="Barnay S."/>
            <person name="Blanchin S."/>
            <person name="Beckerich J.-M."/>
            <person name="Beyne E."/>
            <person name="Bleykasten C."/>
            <person name="Boisrame A."/>
            <person name="Boyer J."/>
            <person name="Cattolico L."/>
            <person name="Confanioleri F."/>
            <person name="de Daruvar A."/>
            <person name="Despons L."/>
            <person name="Fabre E."/>
            <person name="Fairhead C."/>
            <person name="Ferry-Dumazet H."/>
            <person name="Groppi A."/>
            <person name="Hantraye F."/>
            <person name="Hennequin C."/>
            <person name="Jauniaux N."/>
            <person name="Joyet P."/>
            <person name="Kachouri R."/>
            <person name="Kerrest A."/>
            <person name="Koszul R."/>
            <person name="Lemaire M."/>
            <person name="Lesur I."/>
            <person name="Ma L."/>
            <person name="Muller H."/>
            <person name="Nicaud J.-M."/>
            <person name="Nikolski M."/>
            <person name="Oztas S."/>
            <person name="Ozier-Kalogeropoulos O."/>
            <person name="Pellenz S."/>
            <person name="Potier S."/>
            <person name="Richard G.-F."/>
            <person name="Straub M.-L."/>
            <person name="Suleau A."/>
            <person name="Swennen D."/>
            <person name="Tekaia F."/>
            <person name="Wesolowski-Louvel M."/>
            <person name="Westhof E."/>
            <person name="Wirth B."/>
            <person name="Zeniou-Meyer M."/>
            <person name="Zivanovic Y."/>
            <person name="Bolotin-Fukuhara M."/>
            <person name="Thierry A."/>
            <person name="Bouchier C."/>
            <person name="Caudron B."/>
            <person name="Scarpelli C."/>
            <person name="Gaillardin C."/>
            <person name="Weissenbach J."/>
            <person name="Wincker P."/>
            <person name="Souciet J.-L."/>
        </authorList>
    </citation>
    <scope>NUCLEOTIDE SEQUENCE [LARGE SCALE GENOMIC DNA]</scope>
    <source>
        <strain>ATCC 8585 / CBS 2359 / DSM 70799 / NBRC 1267 / NRRL Y-1140 / WM37</strain>
    </source>
</reference>
<feature type="chain" id="PRO_0000215457" description="Dol-P-Glc:Glc(2)Man(9)GlcNAc(2)-PP-Dol alpha-1,2-glucosyltransferase">
    <location>
        <begin position="1"/>
        <end position="533"/>
    </location>
</feature>
<feature type="transmembrane region" description="Helical" evidence="2">
    <location>
        <begin position="54"/>
        <end position="74"/>
    </location>
</feature>
<feature type="transmembrane region" description="Helical" evidence="2">
    <location>
        <begin position="139"/>
        <end position="159"/>
    </location>
</feature>
<feature type="transmembrane region" description="Helical" evidence="2">
    <location>
        <begin position="162"/>
        <end position="182"/>
    </location>
</feature>
<feature type="transmembrane region" description="Helical" evidence="2">
    <location>
        <begin position="184"/>
        <end position="204"/>
    </location>
</feature>
<feature type="transmembrane region" description="Helical" evidence="2">
    <location>
        <begin position="205"/>
        <end position="225"/>
    </location>
</feature>
<feature type="transmembrane region" description="Helical" evidence="2">
    <location>
        <begin position="234"/>
        <end position="251"/>
    </location>
</feature>
<feature type="transmembrane region" description="Helical" evidence="2">
    <location>
        <begin position="274"/>
        <end position="294"/>
    </location>
</feature>
<feature type="transmembrane region" description="Helical" evidence="2">
    <location>
        <begin position="312"/>
        <end position="332"/>
    </location>
</feature>
<feature type="transmembrane region" description="Helical" evidence="2">
    <location>
        <begin position="351"/>
        <end position="371"/>
    </location>
</feature>
<feature type="transmembrane region" description="Helical" evidence="2">
    <location>
        <begin position="392"/>
        <end position="412"/>
    </location>
</feature>
<feature type="transmembrane region" description="Helical" evidence="2">
    <location>
        <begin position="440"/>
        <end position="460"/>
    </location>
</feature>
<feature type="transmembrane region" description="Helical" evidence="2">
    <location>
        <begin position="465"/>
        <end position="485"/>
    </location>
</feature>
<feature type="transmembrane region" description="Helical" evidence="2">
    <location>
        <begin position="498"/>
        <end position="518"/>
    </location>
</feature>
<feature type="glycosylation site" description="N-linked (GlcNAc...) asparagine" evidence="2">
    <location>
        <position position="80"/>
    </location>
</feature>
<feature type="glycosylation site" description="N-linked (GlcNAc...) asparagine" evidence="2">
    <location>
        <position position="135"/>
    </location>
</feature>
<feature type="glycosylation site" description="N-linked (GlcNAc...) asparagine" evidence="2">
    <location>
        <position position="295"/>
    </location>
</feature>
<gene>
    <name type="primary">ALG10</name>
    <name type="ordered locus">KLLA0E15884g</name>
</gene>
<proteinExistence type="inferred from homology"/>
<protein>
    <recommendedName>
        <fullName evidence="1">Dol-P-Glc:Glc(2)Man(9)GlcNAc(2)-PP-Dol alpha-1,2-glucosyltransferase</fullName>
        <ecNumber evidence="1">2.4.1.256</ecNumber>
    </recommendedName>
    <alternativeName>
        <fullName>Alpha-1,2-glucosyltransferase ALG10-A</fullName>
    </alternativeName>
    <alternativeName>
        <fullName>Alpha-2-glucosyltransferase ALG10</fullName>
    </alternativeName>
    <alternativeName>
        <fullName>Asparagine-linked glycosylation protein 10</fullName>
    </alternativeName>
    <alternativeName>
        <fullName>Dolichyl-phosphoglucose-dependent glucosyltransferase ALG10</fullName>
    </alternativeName>
</protein>
<accession>Q6CN27</accession>
<sequence>MISSQIQDGETVGKYSCPTASKRYPSDAAIMSVSETEEKNAVVVEFSRDVEREVVVGIYANVIIWPIATALFCYLAYTLNTTGLPYVFIDEKFHVDQTLRYLRGKWYSWNGKITTPPGLYLLGWLQYHATRFITNWSTLTVLRLTNLIGGVIVWPWVVLRPLYLFNALGFWPVTLMCFPLMASYYFLYYTDIWSTIFIVESLNLALVLPFGETASIWMSALCGLISCLFRQTNIVWNVLIMILVVERRAMIEKNFNTLNFNNYLKLVLHTLENFKSLVLPYAINFGLFLAFLLYNRSITLGDKSNHVAGLHIVQFFYCLMFIAFFSVPVWFSKQVTLSYLIRFVMNPVKYLLELLGIMLIIRYFTVVHPFLLADNRHITFYLFKKLIGRSSLFKYCVMAPIYHFSAYVYLEVMRPSTMIFHPILPIEIKNPIDLPIQLTHISWTALIMCTFMTVVPSPLFEPRYYILPFIFWRLFITMAPEPFWGNPIGKVTGTKRHLSECAWFMIINLITYIIFKRFDIKWESETTVQHIIW</sequence>
<keyword id="KW-0256">Endoplasmic reticulum</keyword>
<keyword id="KW-0325">Glycoprotein</keyword>
<keyword id="KW-0328">Glycosyltransferase</keyword>
<keyword id="KW-0472">Membrane</keyword>
<keyword id="KW-1185">Reference proteome</keyword>
<keyword id="KW-0808">Transferase</keyword>
<keyword id="KW-0812">Transmembrane</keyword>
<keyword id="KW-1133">Transmembrane helix</keyword>